<protein>
    <recommendedName>
        <fullName evidence="1">Phosphoenolpyruvate carboxylase</fullName>
        <shortName evidence="1">PEPC</shortName>
        <shortName evidence="1">PEPCase</shortName>
        <ecNumber evidence="1">4.1.1.31</ecNumber>
    </recommendedName>
</protein>
<organism>
    <name type="scientific">Escherichia coli O1:K1 / APEC</name>
    <dbReference type="NCBI Taxonomy" id="405955"/>
    <lineage>
        <taxon>Bacteria</taxon>
        <taxon>Pseudomonadati</taxon>
        <taxon>Pseudomonadota</taxon>
        <taxon>Gammaproteobacteria</taxon>
        <taxon>Enterobacterales</taxon>
        <taxon>Enterobacteriaceae</taxon>
        <taxon>Escherichia</taxon>
    </lineage>
</organism>
<gene>
    <name evidence="1" type="primary">ppc</name>
    <name type="ordered locus">Ecok1_39300</name>
    <name type="ORF">APECO1_2511</name>
</gene>
<name>CAPP_ECOK1</name>
<accession>A1AID4</accession>
<evidence type="ECO:0000255" key="1">
    <source>
        <dbReference type="HAMAP-Rule" id="MF_00595"/>
    </source>
</evidence>
<reference key="1">
    <citation type="journal article" date="2007" name="J. Bacteriol.">
        <title>The genome sequence of avian pathogenic Escherichia coli strain O1:K1:H7 shares strong similarities with human extraintestinal pathogenic E. coli genomes.</title>
        <authorList>
            <person name="Johnson T.J."/>
            <person name="Kariyawasam S."/>
            <person name="Wannemuehler Y."/>
            <person name="Mangiamele P."/>
            <person name="Johnson S.J."/>
            <person name="Doetkott C."/>
            <person name="Skyberg J.A."/>
            <person name="Lynne A.M."/>
            <person name="Johnson J.R."/>
            <person name="Nolan L.K."/>
        </authorList>
    </citation>
    <scope>NUCLEOTIDE SEQUENCE [LARGE SCALE GENOMIC DNA]</scope>
</reference>
<dbReference type="EC" id="4.1.1.31" evidence="1"/>
<dbReference type="EMBL" id="CP000468">
    <property type="protein sequence ID" value="ABJ03424.1"/>
    <property type="molecule type" value="Genomic_DNA"/>
</dbReference>
<dbReference type="RefSeq" id="WP_001005584.1">
    <property type="nucleotide sequence ID" value="NZ_CADILS010000014.1"/>
</dbReference>
<dbReference type="SMR" id="A1AID4"/>
<dbReference type="KEGG" id="ecv:APECO1_2511"/>
<dbReference type="HOGENOM" id="CLU_006557_2_0_6"/>
<dbReference type="Proteomes" id="UP000008216">
    <property type="component" value="Chromosome"/>
</dbReference>
<dbReference type="GO" id="GO:0005829">
    <property type="term" value="C:cytosol"/>
    <property type="evidence" value="ECO:0007669"/>
    <property type="project" value="TreeGrafter"/>
</dbReference>
<dbReference type="GO" id="GO:0000287">
    <property type="term" value="F:magnesium ion binding"/>
    <property type="evidence" value="ECO:0007669"/>
    <property type="project" value="UniProtKB-UniRule"/>
</dbReference>
<dbReference type="GO" id="GO:0008964">
    <property type="term" value="F:phosphoenolpyruvate carboxylase activity"/>
    <property type="evidence" value="ECO:0007669"/>
    <property type="project" value="UniProtKB-UniRule"/>
</dbReference>
<dbReference type="GO" id="GO:0015977">
    <property type="term" value="P:carbon fixation"/>
    <property type="evidence" value="ECO:0007669"/>
    <property type="project" value="UniProtKB-UniRule"/>
</dbReference>
<dbReference type="GO" id="GO:0006107">
    <property type="term" value="P:oxaloacetate metabolic process"/>
    <property type="evidence" value="ECO:0007669"/>
    <property type="project" value="UniProtKB-UniRule"/>
</dbReference>
<dbReference type="GO" id="GO:0006099">
    <property type="term" value="P:tricarboxylic acid cycle"/>
    <property type="evidence" value="ECO:0007669"/>
    <property type="project" value="InterPro"/>
</dbReference>
<dbReference type="FunFam" id="1.20.1440.90:FF:000002">
    <property type="entry name" value="Phosphoenolpyruvate carboxylase"/>
    <property type="match status" value="1"/>
</dbReference>
<dbReference type="Gene3D" id="1.20.1440.90">
    <property type="entry name" value="Phosphoenolpyruvate/pyruvate domain"/>
    <property type="match status" value="1"/>
</dbReference>
<dbReference type="HAMAP" id="MF_00595">
    <property type="entry name" value="PEPcase_type1"/>
    <property type="match status" value="1"/>
</dbReference>
<dbReference type="InterPro" id="IPR021135">
    <property type="entry name" value="PEP_COase"/>
</dbReference>
<dbReference type="InterPro" id="IPR022805">
    <property type="entry name" value="PEP_COase_bac/pln-type"/>
</dbReference>
<dbReference type="InterPro" id="IPR018129">
    <property type="entry name" value="PEP_COase_Lys_AS"/>
</dbReference>
<dbReference type="InterPro" id="IPR033129">
    <property type="entry name" value="PEPCASE_His_AS"/>
</dbReference>
<dbReference type="InterPro" id="IPR015813">
    <property type="entry name" value="Pyrv/PenolPyrv_kinase-like_dom"/>
</dbReference>
<dbReference type="NCBIfam" id="NF000584">
    <property type="entry name" value="PRK00009.1"/>
    <property type="match status" value="1"/>
</dbReference>
<dbReference type="PANTHER" id="PTHR30523">
    <property type="entry name" value="PHOSPHOENOLPYRUVATE CARBOXYLASE"/>
    <property type="match status" value="1"/>
</dbReference>
<dbReference type="PANTHER" id="PTHR30523:SF6">
    <property type="entry name" value="PHOSPHOENOLPYRUVATE CARBOXYLASE"/>
    <property type="match status" value="1"/>
</dbReference>
<dbReference type="Pfam" id="PF00311">
    <property type="entry name" value="PEPcase"/>
    <property type="match status" value="1"/>
</dbReference>
<dbReference type="PRINTS" id="PR00150">
    <property type="entry name" value="PEPCARBXLASE"/>
</dbReference>
<dbReference type="SUPFAM" id="SSF51621">
    <property type="entry name" value="Phosphoenolpyruvate/pyruvate domain"/>
    <property type="match status" value="1"/>
</dbReference>
<dbReference type="PROSITE" id="PS00781">
    <property type="entry name" value="PEPCASE_1"/>
    <property type="match status" value="1"/>
</dbReference>
<dbReference type="PROSITE" id="PS00393">
    <property type="entry name" value="PEPCASE_2"/>
    <property type="match status" value="1"/>
</dbReference>
<proteinExistence type="inferred from homology"/>
<sequence>MNEQYSALRSNVSMLGKVLGETIKDALGEHILERVETIRKLSKSSRAGNDANRQELLTTLQNLSNDELLPVARAFSQFLNLANTAEQYHSISPKGEAASNPEVIARTLRKLKNQPELSEDTIKKAVESLSLELVLTAHPTEITRRTLIHKMVEVNACLKQLDNKDIADYEHNQLMRRLRQLIAQSWHTDEIRKLRPSPVDEAKWGFAVVENSLWQGVPNYLRELNEQLEENLGYKLPVEFVPVRFTSWMGGDRDGNPNVTADITRHVLLLSRWKATDLFLKDIQVLVSELSMVEATPELLALVGEEGAAEPYRYLMKNLRSRLMATQAWLEARLKGEELPKPEGLLTQNEELWEPLYACYQSLQACGMGIIANGDLLDTLRRVKCFGVPLVRIDIRQESTRHTEALGELTRYLGIGDYESWSEADKQAFLIRELNSKRPLLPRNWQPSAETREVLDTCQVIAEAPQGSIAAYVISMAKTPSDVLAVHLLLKEAGIGFAMPVAPLFETLDDLNNANDVMTQLLNIDWYRGLIQGKQMVMIGYSDSAKDAGVMAASWAQYQAQDALIKTCEKAGIELTLFHGRGGSIGRGGAPAHAALLSQPPGSLKGGLRVTEQGEMIRFKYGLPEITVSSLSLYTGAILEANLLPPPEPKESWRRIMDELSVISCDVYRGYVRENKDFVPYFRSATPEQELGKLPLGSRPAKRRPTGGVESLRAIPWIFAWTQNRLMLPAWLGAGTALQKVVEDGKQNELEAMCRDWPFFSTRLGMLEMVFAKADLWLAEYYDQRLVDKALWPLGKELRNLQEEDIKVVLAIANDSHLMADLPWIAESIQLRNIYTDPLNVLQAELLHRSRQAEKEGQEPDPRVEQALMVTIAGIAAGMRNTG</sequence>
<keyword id="KW-0120">Carbon dioxide fixation</keyword>
<keyword id="KW-0456">Lyase</keyword>
<keyword id="KW-0460">Magnesium</keyword>
<keyword id="KW-1185">Reference proteome</keyword>
<feature type="chain" id="PRO_1000025556" description="Phosphoenolpyruvate carboxylase">
    <location>
        <begin position="1"/>
        <end position="883"/>
    </location>
</feature>
<feature type="active site" evidence="1">
    <location>
        <position position="138"/>
    </location>
</feature>
<feature type="active site" evidence="1">
    <location>
        <position position="546"/>
    </location>
</feature>
<comment type="function">
    <text evidence="1">Forms oxaloacetate, a four-carbon dicarboxylic acid source for the tricarboxylic acid cycle.</text>
</comment>
<comment type="catalytic activity">
    <reaction evidence="1">
        <text>oxaloacetate + phosphate = phosphoenolpyruvate + hydrogencarbonate</text>
        <dbReference type="Rhea" id="RHEA:28370"/>
        <dbReference type="ChEBI" id="CHEBI:16452"/>
        <dbReference type="ChEBI" id="CHEBI:17544"/>
        <dbReference type="ChEBI" id="CHEBI:43474"/>
        <dbReference type="ChEBI" id="CHEBI:58702"/>
        <dbReference type="EC" id="4.1.1.31"/>
    </reaction>
</comment>
<comment type="cofactor">
    <cofactor evidence="1">
        <name>Mg(2+)</name>
        <dbReference type="ChEBI" id="CHEBI:18420"/>
    </cofactor>
</comment>
<comment type="similarity">
    <text evidence="1">Belongs to the PEPCase type 1 family.</text>
</comment>